<reference key="1">
    <citation type="submission" date="2007-10" db="EMBL/GenBank/DDBJ databases">
        <title>Complete sequence of chromosome of Desulforudis audaxviator MP104C.</title>
        <authorList>
            <person name="Copeland A."/>
            <person name="Lucas S."/>
            <person name="Lapidus A."/>
            <person name="Barry K."/>
            <person name="Glavina del Rio T."/>
            <person name="Dalin E."/>
            <person name="Tice H."/>
            <person name="Bruce D."/>
            <person name="Pitluck S."/>
            <person name="Lowry S.R."/>
            <person name="Larimer F."/>
            <person name="Land M.L."/>
            <person name="Hauser L."/>
            <person name="Kyrpides N."/>
            <person name="Ivanova N.N."/>
            <person name="Richardson P."/>
        </authorList>
    </citation>
    <scope>NUCLEOTIDE SEQUENCE [LARGE SCALE GENOMIC DNA]</scope>
    <source>
        <strain>MP104C</strain>
    </source>
</reference>
<keyword id="KW-0067">ATP-binding</keyword>
<keyword id="KW-0143">Chaperone</keyword>
<keyword id="KW-0547">Nucleotide-binding</keyword>
<keyword id="KW-0597">Phosphoprotein</keyword>
<keyword id="KW-1185">Reference proteome</keyword>
<keyword id="KW-0346">Stress response</keyword>
<name>DNAK_DESAP</name>
<dbReference type="EMBL" id="CP000860">
    <property type="protein sequence ID" value="ACA60547.1"/>
    <property type="molecule type" value="Genomic_DNA"/>
</dbReference>
<dbReference type="RefSeq" id="WP_012303122.1">
    <property type="nucleotide sequence ID" value="NC_010424.1"/>
</dbReference>
<dbReference type="SMR" id="B1I699"/>
<dbReference type="STRING" id="477974.Daud_2057"/>
<dbReference type="KEGG" id="dau:Daud_2057"/>
<dbReference type="eggNOG" id="COG0443">
    <property type="taxonomic scope" value="Bacteria"/>
</dbReference>
<dbReference type="HOGENOM" id="CLU_005965_2_1_9"/>
<dbReference type="OrthoDB" id="9766019at2"/>
<dbReference type="Proteomes" id="UP000008544">
    <property type="component" value="Chromosome"/>
</dbReference>
<dbReference type="GO" id="GO:0005524">
    <property type="term" value="F:ATP binding"/>
    <property type="evidence" value="ECO:0007669"/>
    <property type="project" value="UniProtKB-UniRule"/>
</dbReference>
<dbReference type="GO" id="GO:0140662">
    <property type="term" value="F:ATP-dependent protein folding chaperone"/>
    <property type="evidence" value="ECO:0007669"/>
    <property type="project" value="InterPro"/>
</dbReference>
<dbReference type="GO" id="GO:0051082">
    <property type="term" value="F:unfolded protein binding"/>
    <property type="evidence" value="ECO:0007669"/>
    <property type="project" value="InterPro"/>
</dbReference>
<dbReference type="CDD" id="cd10234">
    <property type="entry name" value="ASKHA_NBD_HSP70_DnaK-like"/>
    <property type="match status" value="1"/>
</dbReference>
<dbReference type="FunFam" id="2.60.34.10:FF:000014">
    <property type="entry name" value="Chaperone protein DnaK HSP70"/>
    <property type="match status" value="1"/>
</dbReference>
<dbReference type="FunFam" id="1.20.1270.10:FF:000001">
    <property type="entry name" value="Molecular chaperone DnaK"/>
    <property type="match status" value="1"/>
</dbReference>
<dbReference type="FunFam" id="3.30.420.40:FF:000071">
    <property type="entry name" value="Molecular chaperone DnaK"/>
    <property type="match status" value="1"/>
</dbReference>
<dbReference type="FunFam" id="3.90.640.10:FF:000003">
    <property type="entry name" value="Molecular chaperone DnaK"/>
    <property type="match status" value="1"/>
</dbReference>
<dbReference type="Gene3D" id="1.20.1270.10">
    <property type="match status" value="1"/>
</dbReference>
<dbReference type="Gene3D" id="3.30.420.40">
    <property type="match status" value="2"/>
</dbReference>
<dbReference type="Gene3D" id="3.90.640.10">
    <property type="entry name" value="Actin, Chain A, domain 4"/>
    <property type="match status" value="1"/>
</dbReference>
<dbReference type="Gene3D" id="2.60.34.10">
    <property type="entry name" value="Substrate Binding Domain Of DNAk, Chain A, domain 1"/>
    <property type="match status" value="1"/>
</dbReference>
<dbReference type="HAMAP" id="MF_00332">
    <property type="entry name" value="DnaK"/>
    <property type="match status" value="1"/>
</dbReference>
<dbReference type="InterPro" id="IPR043129">
    <property type="entry name" value="ATPase_NBD"/>
</dbReference>
<dbReference type="InterPro" id="IPR012725">
    <property type="entry name" value="Chaperone_DnaK"/>
</dbReference>
<dbReference type="InterPro" id="IPR018181">
    <property type="entry name" value="Heat_shock_70_CS"/>
</dbReference>
<dbReference type="InterPro" id="IPR029048">
    <property type="entry name" value="HSP70_C_sf"/>
</dbReference>
<dbReference type="InterPro" id="IPR029047">
    <property type="entry name" value="HSP70_peptide-bd_sf"/>
</dbReference>
<dbReference type="InterPro" id="IPR013126">
    <property type="entry name" value="Hsp_70_fam"/>
</dbReference>
<dbReference type="NCBIfam" id="NF001413">
    <property type="entry name" value="PRK00290.1"/>
    <property type="match status" value="1"/>
</dbReference>
<dbReference type="NCBIfam" id="TIGR02350">
    <property type="entry name" value="prok_dnaK"/>
    <property type="match status" value="1"/>
</dbReference>
<dbReference type="PANTHER" id="PTHR19375">
    <property type="entry name" value="HEAT SHOCK PROTEIN 70KDA"/>
    <property type="match status" value="1"/>
</dbReference>
<dbReference type="Pfam" id="PF00012">
    <property type="entry name" value="HSP70"/>
    <property type="match status" value="1"/>
</dbReference>
<dbReference type="PRINTS" id="PR00301">
    <property type="entry name" value="HEATSHOCK70"/>
</dbReference>
<dbReference type="SUPFAM" id="SSF53067">
    <property type="entry name" value="Actin-like ATPase domain"/>
    <property type="match status" value="2"/>
</dbReference>
<dbReference type="SUPFAM" id="SSF100934">
    <property type="entry name" value="Heat shock protein 70kD (HSP70), C-terminal subdomain"/>
    <property type="match status" value="1"/>
</dbReference>
<dbReference type="SUPFAM" id="SSF100920">
    <property type="entry name" value="Heat shock protein 70kD (HSP70), peptide-binding domain"/>
    <property type="match status" value="1"/>
</dbReference>
<dbReference type="PROSITE" id="PS00297">
    <property type="entry name" value="HSP70_1"/>
    <property type="match status" value="1"/>
</dbReference>
<dbReference type="PROSITE" id="PS00329">
    <property type="entry name" value="HSP70_2"/>
    <property type="match status" value="1"/>
</dbReference>
<dbReference type="PROSITE" id="PS01036">
    <property type="entry name" value="HSP70_3"/>
    <property type="match status" value="1"/>
</dbReference>
<protein>
    <recommendedName>
        <fullName evidence="1">Chaperone protein DnaK</fullName>
    </recommendedName>
    <alternativeName>
        <fullName evidence="1">HSP70</fullName>
    </alternativeName>
    <alternativeName>
        <fullName evidence="1">Heat shock 70 kDa protein</fullName>
    </alternativeName>
    <alternativeName>
        <fullName evidence="1">Heat shock protein 70</fullName>
    </alternativeName>
</protein>
<proteinExistence type="inferred from homology"/>
<accession>B1I699</accession>
<evidence type="ECO:0000255" key="1">
    <source>
        <dbReference type="HAMAP-Rule" id="MF_00332"/>
    </source>
</evidence>
<evidence type="ECO:0000256" key="2">
    <source>
        <dbReference type="SAM" id="MobiDB-lite"/>
    </source>
</evidence>
<comment type="function">
    <text evidence="1">Acts as a chaperone.</text>
</comment>
<comment type="induction">
    <text evidence="1">By stress conditions e.g. heat shock.</text>
</comment>
<comment type="similarity">
    <text evidence="1">Belongs to the heat shock protein 70 family.</text>
</comment>
<organism>
    <name type="scientific">Desulforudis audaxviator (strain MP104C)</name>
    <dbReference type="NCBI Taxonomy" id="477974"/>
    <lineage>
        <taxon>Bacteria</taxon>
        <taxon>Bacillati</taxon>
        <taxon>Bacillota</taxon>
        <taxon>Clostridia</taxon>
        <taxon>Thermoanaerobacterales</taxon>
        <taxon>Candidatus Desulforudaceae</taxon>
        <taxon>Candidatus Desulforudis</taxon>
    </lineage>
</organism>
<gene>
    <name evidence="1" type="primary">dnaK</name>
    <name type="ordered locus">Daud_2057</name>
</gene>
<feature type="chain" id="PRO_1000119698" description="Chaperone protein DnaK">
    <location>
        <begin position="1"/>
        <end position="607"/>
    </location>
</feature>
<feature type="region of interest" description="Disordered" evidence="2">
    <location>
        <begin position="571"/>
        <end position="607"/>
    </location>
</feature>
<feature type="compositionally biased region" description="Basic and acidic residues" evidence="2">
    <location>
        <begin position="589"/>
        <end position="607"/>
    </location>
</feature>
<feature type="modified residue" description="Phosphothreonine; by autocatalysis" evidence="1">
    <location>
        <position position="174"/>
    </location>
</feature>
<sequence length="607" mass="66089">MSKIIGIDLGTTNSCMAVMEGGEAVVMPNAEGGRTTPSVVGFSKTGERLVGQVAKRQAISNPERTVTSIKRYMGTDHKVRIEGNEYTPQEISAMILQKMKTDAEAYLGSKVERAVITVPAYFSDAQRQATKDAGRIAGLKVERIINEPTAAALAYGLDKEEDQTILVFDLGGGTFDVSILELGDGVFEVKATSGNNRLGGDDFDQRIIDWIVAEFKKESGIDLSRDRMAMQRLREAAEKAKVELSSVVNTNINLPFITADAEGPKHLDLNLSRAKFEELTADLIEMTMGPTRQAMQDAGLEPKQIDKILLVGGATRMPSVQEAVRRFFGKEPHKGINPDECVAIGAAIQAGVLTGEVKDVVLLDVTPLSLGIETLGGVFTKIIERNTTIPTARSQIFTTAADNQPSVEIHVLQGERQMAAGNKTLGRFNLVGIPPAPRGIPQIEVTFDIDVNGIVNVSAKDLGTGKSQSITITGSTGLSDAEIERMVKEAEQYAEEDRKRREEVEIRNNADALVYQSEKTLKEHRDQADPNQVSELEQAVDRLKKALEGGDIERIKRETENLTGPLHAFTAAMYQKQAQQQQPGPGPDAGKDKDDKDKTVDADYEVK</sequence>